<name>DAW1_MOUSE</name>
<sequence length="415" mass="45887">MKLKSLLLRYYPPGIMLEYEKGGELKTKSIDLLELSPSTDVNTLVGEIQQAEPLITASRTKQVRLLVQRLQEKLRQHSDHNFYLFKVLRAHILPLTNVALNKAGSCFITGSYDRTCKVWDTASGEELHTLEGHKNVVYAIAFNNPYGDKIATGSFDKTCKLWSAETGKCYHTFRGHTAEIVCLSFNPQSTVVATGSMDTTAKLWDIQNGEEVVTLTGHLAEIISLSFDTSGDRIITGSFDHTVVVWDASTGRKVHTLIGHCAEISSALFNWDCSLILTGSMDKTCMLWDATSGKYVATLTGHDDEILDSCFDYTGKLIATASADGTARVYNATTRKCVTKLEGHEGEISKISFNPQGNRLLTGSSDKTARIWDVQTGQCLQVLEGHTDEIFSCAFNYKGNIVITGSKDNSCRIWR</sequence>
<evidence type="ECO:0000250" key="1">
    <source>
        <dbReference type="UniProtKB" id="Q3Y8L7"/>
    </source>
</evidence>
<evidence type="ECO:0000250" key="2">
    <source>
        <dbReference type="UniProtKB" id="Q8N136"/>
    </source>
</evidence>
<evidence type="ECO:0000255" key="3"/>
<evidence type="ECO:0000269" key="4">
    <source>
    </source>
</evidence>
<evidence type="ECO:0000305" key="5"/>
<evidence type="ECO:0000312" key="6">
    <source>
        <dbReference type="MGI" id="MGI:1923089"/>
    </source>
</evidence>
<proteinExistence type="evidence at transcript level"/>
<accession>D3Z7A5</accession>
<reference key="1">
    <citation type="journal article" date="2009" name="PLoS Biol.">
        <title>Lineage-specific biology revealed by a finished genome assembly of the mouse.</title>
        <authorList>
            <person name="Church D.M."/>
            <person name="Goodstadt L."/>
            <person name="Hillier L.W."/>
            <person name="Zody M.C."/>
            <person name="Goldstein S."/>
            <person name="She X."/>
            <person name="Bult C.J."/>
            <person name="Agarwala R."/>
            <person name="Cherry J.L."/>
            <person name="DiCuccio M."/>
            <person name="Hlavina W."/>
            <person name="Kapustin Y."/>
            <person name="Meric P."/>
            <person name="Maglott D."/>
            <person name="Birtle Z."/>
            <person name="Marques A.C."/>
            <person name="Graves T."/>
            <person name="Zhou S."/>
            <person name="Teague B."/>
            <person name="Potamousis K."/>
            <person name="Churas C."/>
            <person name="Place M."/>
            <person name="Herschleb J."/>
            <person name="Runnheim R."/>
            <person name="Forrest D."/>
            <person name="Amos-Landgraf J."/>
            <person name="Schwartz D.C."/>
            <person name="Cheng Z."/>
            <person name="Lindblad-Toh K."/>
            <person name="Eichler E.E."/>
            <person name="Ponting C.P."/>
        </authorList>
    </citation>
    <scope>NUCLEOTIDE SEQUENCE [LARGE SCALE GENOMIC DNA]</scope>
    <source>
        <strain>C57BL/6J</strain>
    </source>
</reference>
<reference key="2">
    <citation type="journal article" date="2022" name="Genet. Med.">
        <title>Biallelic DAW1 variants cause a motile ciliopathy characterized by laterality defects and subtle ciliary beating abnormalities.</title>
        <authorList>
            <person name="Leslie J.S."/>
            <person name="Hjeij R."/>
            <person name="Vivante A."/>
            <person name="Bearce E.A."/>
            <person name="Dyer L."/>
            <person name="Wang J."/>
            <person name="Rawlins L."/>
            <person name="Kennedy J."/>
            <person name="Ubeyratna N."/>
            <person name="Fasham J."/>
            <person name="Irons Z.H."/>
            <person name="Craig S.B."/>
            <person name="Koenig J."/>
            <person name="George S."/>
            <person name="Pode-Shakked B."/>
            <person name="Bolkier Y."/>
            <person name="Barel O."/>
            <person name="Mane S."/>
            <person name="Frederiksen K.K."/>
            <person name="Wenger O."/>
            <person name="Scott E."/>
            <person name="Cross H.E."/>
            <person name="Lorentzen E."/>
            <person name="Norris D.P."/>
            <person name="Anikster Y."/>
            <person name="Omran H."/>
            <person name="Grimes D.T."/>
            <person name="Crosby A.H."/>
            <person name="Baple E.L."/>
        </authorList>
    </citation>
    <scope>TISSUE SPECIFICITY</scope>
</reference>
<keyword id="KW-0966">Cell projection</keyword>
<keyword id="KW-0969">Cilium</keyword>
<keyword id="KW-0963">Cytoplasm</keyword>
<keyword id="KW-0206">Cytoskeleton</keyword>
<keyword id="KW-0282">Flagellum</keyword>
<keyword id="KW-1185">Reference proteome</keyword>
<keyword id="KW-0677">Repeat</keyword>
<keyword id="KW-0853">WD repeat</keyword>
<gene>
    <name evidence="6" type="primary">Daw1</name>
    <name evidence="6" type="synonym">Wdr69</name>
</gene>
<organism>
    <name type="scientific">Mus musculus</name>
    <name type="common">Mouse</name>
    <dbReference type="NCBI Taxonomy" id="10090"/>
    <lineage>
        <taxon>Eukaryota</taxon>
        <taxon>Metazoa</taxon>
        <taxon>Chordata</taxon>
        <taxon>Craniata</taxon>
        <taxon>Vertebrata</taxon>
        <taxon>Euteleostomi</taxon>
        <taxon>Mammalia</taxon>
        <taxon>Eutheria</taxon>
        <taxon>Euarchontoglires</taxon>
        <taxon>Glires</taxon>
        <taxon>Rodentia</taxon>
        <taxon>Myomorpha</taxon>
        <taxon>Muroidea</taxon>
        <taxon>Muridae</taxon>
        <taxon>Murinae</taxon>
        <taxon>Mus</taxon>
        <taxon>Mus</taxon>
    </lineage>
</organism>
<comment type="function">
    <text evidence="2">Required for axonemal dynein assembly and ciliary motility in ciliated organs, including Kupffer's vesicle, during embryogenesis (By similarity). Facilitates the onset of robust cilia motility during development (By similarity).</text>
</comment>
<comment type="subunit">
    <text evidence="2">Interacts with IFT46.</text>
</comment>
<comment type="subcellular location">
    <subcellularLocation>
        <location evidence="1">Cytoplasm</location>
        <location evidence="1">Cytoskeleton</location>
        <location evidence="1">Flagellum basal body</location>
    </subcellularLocation>
    <subcellularLocation>
        <location evidence="1">Cytoplasm</location>
        <location evidence="1">Cytoskeleton</location>
        <location evidence="1">Flagellum axoneme</location>
    </subcellularLocation>
    <text evidence="1">Expression is concentrated at the flagellum basal body but is also detected along the length of the flagellum.</text>
</comment>
<comment type="tissue specificity">
    <text evidence="4">In early mouse embryos, expression is limited to distal, motile ciliated cells of the node.</text>
</comment>
<comment type="similarity">
    <text evidence="5">Belongs to the WD repeat WDR69 family.</text>
</comment>
<dbReference type="CCDS" id="CCDS87856.1"/>
<dbReference type="RefSeq" id="NP_001359173.1">
    <property type="nucleotide sequence ID" value="NM_001372244.1"/>
</dbReference>
<dbReference type="RefSeq" id="XP_006496611.1">
    <property type="nucleotide sequence ID" value="XM_006496548.2"/>
</dbReference>
<dbReference type="SMR" id="D3Z7A5"/>
<dbReference type="FunCoup" id="D3Z7A5">
    <property type="interactions" value="5"/>
</dbReference>
<dbReference type="iPTMnet" id="D3Z7A5"/>
<dbReference type="PhosphoSitePlus" id="D3Z7A5"/>
<dbReference type="SwissPalm" id="D3Z7A5"/>
<dbReference type="ProteomicsDB" id="355095"/>
<dbReference type="Antibodypedia" id="49828">
    <property type="antibodies" value="16 antibodies from 8 providers"/>
</dbReference>
<dbReference type="DNASU" id="71227"/>
<dbReference type="Ensembl" id="ENSMUST00000065403.7">
    <property type="protein sequence ID" value="ENSMUSP00000067583.7"/>
    <property type="gene ID" value="ENSMUSG00000053161.17"/>
</dbReference>
<dbReference type="GeneID" id="71227"/>
<dbReference type="AGR" id="MGI:1923089"/>
<dbReference type="MGI" id="MGI:1923089">
    <property type="gene designation" value="Daw1"/>
</dbReference>
<dbReference type="VEuPathDB" id="HostDB:ENSMUSG00000053161"/>
<dbReference type="GeneTree" id="ENSGT00940000162537"/>
<dbReference type="HOGENOM" id="CLU_000288_57_33_1"/>
<dbReference type="InParanoid" id="D3Z7A5"/>
<dbReference type="OMA" id="TCKLWEA"/>
<dbReference type="OrthoDB" id="674604at2759"/>
<dbReference type="PhylomeDB" id="D3Z7A5"/>
<dbReference type="BioGRID-ORCS" id="71227">
    <property type="hits" value="0 hits in 60 CRISPR screens"/>
</dbReference>
<dbReference type="PRO" id="PR:D3Z7A5"/>
<dbReference type="Proteomes" id="UP000000589">
    <property type="component" value="Chromosome 1"/>
</dbReference>
<dbReference type="RNAct" id="D3Z7A5">
    <property type="molecule type" value="protein"/>
</dbReference>
<dbReference type="Bgee" id="ENSMUSG00000053161">
    <property type="expression patterns" value="Expressed in spermatocyte and 33 other cell types or tissues"/>
</dbReference>
<dbReference type="ExpressionAtlas" id="D3Z7A5">
    <property type="expression patterns" value="baseline and differential"/>
</dbReference>
<dbReference type="GO" id="GO:0036064">
    <property type="term" value="C:ciliary basal body"/>
    <property type="evidence" value="ECO:0000250"/>
    <property type="project" value="UniProtKB"/>
</dbReference>
<dbReference type="GO" id="GO:0005929">
    <property type="term" value="C:cilium"/>
    <property type="evidence" value="ECO:0000250"/>
    <property type="project" value="UniProtKB"/>
</dbReference>
<dbReference type="GO" id="GO:0005737">
    <property type="term" value="C:cytoplasm"/>
    <property type="evidence" value="ECO:0007669"/>
    <property type="project" value="UniProtKB-KW"/>
</dbReference>
<dbReference type="GO" id="GO:0005576">
    <property type="term" value="C:extracellular region"/>
    <property type="evidence" value="ECO:0007669"/>
    <property type="project" value="GOC"/>
</dbReference>
<dbReference type="GO" id="GO:0031514">
    <property type="term" value="C:motile cilium"/>
    <property type="evidence" value="ECO:0007669"/>
    <property type="project" value="UniProtKB-KW"/>
</dbReference>
<dbReference type="GO" id="GO:0090660">
    <property type="term" value="P:cerebrospinal fluid circulation"/>
    <property type="evidence" value="ECO:0000315"/>
    <property type="project" value="MGI"/>
</dbReference>
<dbReference type="GO" id="GO:0007368">
    <property type="term" value="P:determination of left/right symmetry"/>
    <property type="evidence" value="ECO:0000315"/>
    <property type="project" value="MGI"/>
</dbReference>
<dbReference type="GO" id="GO:0003351">
    <property type="term" value="P:epithelial cilium movement involved in extracellular fluid movement"/>
    <property type="evidence" value="ECO:0000315"/>
    <property type="project" value="MGI"/>
</dbReference>
<dbReference type="GO" id="GO:0051649">
    <property type="term" value="P:establishment of localization in cell"/>
    <property type="evidence" value="ECO:0000315"/>
    <property type="project" value="MGI"/>
</dbReference>
<dbReference type="GO" id="GO:0007507">
    <property type="term" value="P:heart development"/>
    <property type="evidence" value="ECO:0000315"/>
    <property type="project" value="MGI"/>
</dbReference>
<dbReference type="GO" id="GO:0042073">
    <property type="term" value="P:intraciliary transport"/>
    <property type="evidence" value="ECO:0000250"/>
    <property type="project" value="UniProtKB"/>
</dbReference>
<dbReference type="GO" id="GO:0036158">
    <property type="term" value="P:outer dynein arm assembly"/>
    <property type="evidence" value="ECO:0000315"/>
    <property type="project" value="MGI"/>
</dbReference>
<dbReference type="CDD" id="cd00200">
    <property type="entry name" value="WD40"/>
    <property type="match status" value="1"/>
</dbReference>
<dbReference type="FunFam" id="2.130.10.10:FF:000227">
    <property type="entry name" value="Dynein assembly factor with WDR repeat domains 1"/>
    <property type="match status" value="1"/>
</dbReference>
<dbReference type="FunFam" id="2.130.10.10:FF:000250">
    <property type="entry name" value="Dynein assembly factor with WDR repeat domains 1"/>
    <property type="match status" value="1"/>
</dbReference>
<dbReference type="FunFam" id="2.130.10.10:FF:000720">
    <property type="entry name" value="Dynein assembly factor with WDR repeat domains 1"/>
    <property type="match status" value="1"/>
</dbReference>
<dbReference type="FunFam" id="2.130.10.10:FF:001051">
    <property type="entry name" value="dynein assembly factor with WDR repeat domains 1"/>
    <property type="match status" value="1"/>
</dbReference>
<dbReference type="Gene3D" id="2.130.10.10">
    <property type="entry name" value="YVTN repeat-like/Quinoprotein amine dehydrogenase"/>
    <property type="match status" value="4"/>
</dbReference>
<dbReference type="InterPro" id="IPR020472">
    <property type="entry name" value="G-protein_beta_WD-40_rep"/>
</dbReference>
<dbReference type="InterPro" id="IPR015943">
    <property type="entry name" value="WD40/YVTN_repeat-like_dom_sf"/>
</dbReference>
<dbReference type="InterPro" id="IPR019775">
    <property type="entry name" value="WD40_repeat_CS"/>
</dbReference>
<dbReference type="InterPro" id="IPR036322">
    <property type="entry name" value="WD40_repeat_dom_sf"/>
</dbReference>
<dbReference type="InterPro" id="IPR001680">
    <property type="entry name" value="WD40_rpt"/>
</dbReference>
<dbReference type="PANTHER" id="PTHR19848:SF8">
    <property type="entry name" value="F-BOX AND WD REPEAT DOMAIN CONTAINING 7"/>
    <property type="match status" value="1"/>
</dbReference>
<dbReference type="PANTHER" id="PTHR19848">
    <property type="entry name" value="WD40 REPEAT PROTEIN"/>
    <property type="match status" value="1"/>
</dbReference>
<dbReference type="Pfam" id="PF00400">
    <property type="entry name" value="WD40"/>
    <property type="match status" value="8"/>
</dbReference>
<dbReference type="PRINTS" id="PR00320">
    <property type="entry name" value="GPROTEINBRPT"/>
</dbReference>
<dbReference type="SMART" id="SM00320">
    <property type="entry name" value="WD40"/>
    <property type="match status" value="8"/>
</dbReference>
<dbReference type="SUPFAM" id="SSF50978">
    <property type="entry name" value="WD40 repeat-like"/>
    <property type="match status" value="1"/>
</dbReference>
<dbReference type="PROSITE" id="PS00678">
    <property type="entry name" value="WD_REPEATS_1"/>
    <property type="match status" value="4"/>
</dbReference>
<dbReference type="PROSITE" id="PS50082">
    <property type="entry name" value="WD_REPEATS_2"/>
    <property type="match status" value="8"/>
</dbReference>
<dbReference type="PROSITE" id="PS50294">
    <property type="entry name" value="WD_REPEATS_REGION"/>
    <property type="match status" value="8"/>
</dbReference>
<protein>
    <recommendedName>
        <fullName>Dynein assembly factor with WD repeat domains 1</fullName>
    </recommendedName>
</protein>
<feature type="chain" id="PRO_0000458828" description="Dynein assembly factor with WD repeat domains 1">
    <location>
        <begin position="1"/>
        <end position="415"/>
    </location>
</feature>
<feature type="repeat" description="WD 1" evidence="3">
    <location>
        <begin position="90"/>
        <end position="129"/>
    </location>
</feature>
<feature type="repeat" description="WD 2" evidence="3">
    <location>
        <begin position="132"/>
        <end position="174"/>
    </location>
</feature>
<feature type="repeat" description="WD 3" evidence="3">
    <location>
        <begin position="175"/>
        <end position="214"/>
    </location>
</feature>
<feature type="repeat" description="WD 4" evidence="3">
    <location>
        <begin position="217"/>
        <end position="256"/>
    </location>
</feature>
<feature type="repeat" description="WD 5" evidence="3">
    <location>
        <begin position="259"/>
        <end position="298"/>
    </location>
</feature>
<feature type="repeat" description="WD 6" evidence="3">
    <location>
        <begin position="301"/>
        <end position="340"/>
    </location>
</feature>
<feature type="repeat" description="WD 7" evidence="3">
    <location>
        <begin position="343"/>
        <end position="384"/>
    </location>
</feature>
<feature type="repeat" description="WD 8" evidence="3">
    <location>
        <begin position="386"/>
        <end position="415"/>
    </location>
</feature>